<name>GNB5B_DANRE</name>
<keyword id="KW-0472">Membrane</keyword>
<keyword id="KW-1185">Reference proteome</keyword>
<keyword id="KW-0677">Repeat</keyword>
<keyword id="KW-0807">Transducer</keyword>
<keyword id="KW-0853">WD repeat</keyword>
<organism>
    <name type="scientific">Danio rerio</name>
    <name type="common">Zebrafish</name>
    <name type="synonym">Brachydanio rerio</name>
    <dbReference type="NCBI Taxonomy" id="7955"/>
    <lineage>
        <taxon>Eukaryota</taxon>
        <taxon>Metazoa</taxon>
        <taxon>Chordata</taxon>
        <taxon>Craniata</taxon>
        <taxon>Vertebrata</taxon>
        <taxon>Euteleostomi</taxon>
        <taxon>Actinopterygii</taxon>
        <taxon>Neopterygii</taxon>
        <taxon>Teleostei</taxon>
        <taxon>Ostariophysi</taxon>
        <taxon>Cypriniformes</taxon>
        <taxon>Danionidae</taxon>
        <taxon>Danioninae</taxon>
        <taxon>Danio</taxon>
    </lineage>
</organism>
<comment type="function">
    <text evidence="1 2 4">Enhances GTPase-activating protein (GAP) activity of regulator of G protein signaling (RGS) proteins, such as RGS7 and RGS9, hence involved in the termination of the signaling initiated by the G protein coupled receptors (GPCRs) by accelerating the GTP hydrolysis on the G-alpha subunits, thereby promoting their inactivation (By similarity). Increases RGS7 GTPase-activating protein (GAP) activity, thereby regulating mood and cognition (By similarity). Increases RGS9 GTPase-activating protein (GAP) activity, hence contributes to the deactivation of G protein signaling initiated by D(2) dopamine receptors (By similarity). Along with gnb5a, plays an important role in neuronal signaling, including in the parasympathetic, but not sympathetic, control of heart rate (PubMed:27523599).</text>
</comment>
<comment type="subunit">
    <text evidence="1">May interact with RGS9; this interaction stabilizes both proteins and increases RGS9 GTPase-activating protein (GAP) activity, hence accelerating the deactivation of D(2) dopamine receptor-mediated signaling.</text>
</comment>
<comment type="subcellular location">
    <subcellularLocation>
        <location evidence="2">Membrane</location>
    </subcellularLocation>
</comment>
<comment type="disruption phenotype">
    <text evidence="4">No visible phenotype; due to the redundancy with gnb5a. Simultaneous knockout of gnb5a and gnb5b results in no striking dysmorphologic features, but the larvae show impaired swimming activity, remain small, and generally die 7-14 days post fertilization (dpf), most likely as a result of their inability to feed.</text>
</comment>
<comment type="similarity">
    <text evidence="5">Belongs to the WD repeat G protein beta family.</text>
</comment>
<evidence type="ECO:0000250" key="1">
    <source>
        <dbReference type="UniProtKB" id="O14775"/>
    </source>
</evidence>
<evidence type="ECO:0000250" key="2">
    <source>
        <dbReference type="UniProtKB" id="P62881"/>
    </source>
</evidence>
<evidence type="ECO:0000255" key="3">
    <source>
        <dbReference type="PROSITE-ProRule" id="PRU00221"/>
    </source>
</evidence>
<evidence type="ECO:0000269" key="4">
    <source>
    </source>
</evidence>
<evidence type="ECO:0000305" key="5"/>
<evidence type="ECO:0000312" key="6">
    <source>
        <dbReference type="ZFIN" id="ZDB-GENE-040426-1712"/>
    </source>
</evidence>
<accession>Q6PBY0</accession>
<protein>
    <recommendedName>
        <fullName>Guanine nucleotide-binding protein subunit beta-5b</fullName>
    </recommendedName>
</protein>
<sequence length="395" mass="43440">MCDQTFLAITFGPCDKCSENKPLMNIYLKNEPINYCSLCVEMMACQGLAKGETVQSLKAESESLKAKLEEERAKLHDVELHQVAEKMEALGQFVMKTRRTLKGHGNKVLCMDWCRDKRRIVSSSQDGKVIVWDAYTTNKEHAVTMPCTWVMACAYAPSGCAVACGGLDNKCSVYPLSLDKNENLASKKKSVAMHTNYLSSCSFTKSDMQILTSSGDGTCALWDVESGQLLQSFHGHSADVLSLDLAPSETGSTFVSGGCDKKANVWDMRSGQNVQSFETHDSDINSVKYYPSGDAFASGSDDATCRLYDLRADREVAIYSKDSIIFGASSVDFSLSGRLLFAGYNDYNINVWDVLKGTRVAILFGHENRVSTVRVSPDGTAFCSGSWDNTLRIWA</sequence>
<gene>
    <name evidence="6" type="primary">gnb5b</name>
</gene>
<reference key="1">
    <citation type="journal article" date="2013" name="Nature">
        <title>The zebrafish reference genome sequence and its relationship to the human genome.</title>
        <authorList>
            <person name="Howe K."/>
            <person name="Clark M.D."/>
            <person name="Torroja C.F."/>
            <person name="Torrance J."/>
            <person name="Berthelot C."/>
            <person name="Muffato M."/>
            <person name="Collins J.E."/>
            <person name="Humphray S."/>
            <person name="McLaren K."/>
            <person name="Matthews L."/>
            <person name="McLaren S."/>
            <person name="Sealy I."/>
            <person name="Caccamo M."/>
            <person name="Churcher C."/>
            <person name="Scott C."/>
            <person name="Barrett J.C."/>
            <person name="Koch R."/>
            <person name="Rauch G.J."/>
            <person name="White S."/>
            <person name="Chow W."/>
            <person name="Kilian B."/>
            <person name="Quintais L.T."/>
            <person name="Guerra-Assuncao J.A."/>
            <person name="Zhou Y."/>
            <person name="Gu Y."/>
            <person name="Yen J."/>
            <person name="Vogel J.H."/>
            <person name="Eyre T."/>
            <person name="Redmond S."/>
            <person name="Banerjee R."/>
            <person name="Chi J."/>
            <person name="Fu B."/>
            <person name="Langley E."/>
            <person name="Maguire S.F."/>
            <person name="Laird G.K."/>
            <person name="Lloyd D."/>
            <person name="Kenyon E."/>
            <person name="Donaldson S."/>
            <person name="Sehra H."/>
            <person name="Almeida-King J."/>
            <person name="Loveland J."/>
            <person name="Trevanion S."/>
            <person name="Jones M."/>
            <person name="Quail M."/>
            <person name="Willey D."/>
            <person name="Hunt A."/>
            <person name="Burton J."/>
            <person name="Sims S."/>
            <person name="McLay K."/>
            <person name="Plumb B."/>
            <person name="Davis J."/>
            <person name="Clee C."/>
            <person name="Oliver K."/>
            <person name="Clark R."/>
            <person name="Riddle C."/>
            <person name="Elliot D."/>
            <person name="Threadgold G."/>
            <person name="Harden G."/>
            <person name="Ware D."/>
            <person name="Begum S."/>
            <person name="Mortimore B."/>
            <person name="Kerry G."/>
            <person name="Heath P."/>
            <person name="Phillimore B."/>
            <person name="Tracey A."/>
            <person name="Corby N."/>
            <person name="Dunn M."/>
            <person name="Johnson C."/>
            <person name="Wood J."/>
            <person name="Clark S."/>
            <person name="Pelan S."/>
            <person name="Griffiths G."/>
            <person name="Smith M."/>
            <person name="Glithero R."/>
            <person name="Howden P."/>
            <person name="Barker N."/>
            <person name="Lloyd C."/>
            <person name="Stevens C."/>
            <person name="Harley J."/>
            <person name="Holt K."/>
            <person name="Panagiotidis G."/>
            <person name="Lovell J."/>
            <person name="Beasley H."/>
            <person name="Henderson C."/>
            <person name="Gordon D."/>
            <person name="Auger K."/>
            <person name="Wright D."/>
            <person name="Collins J."/>
            <person name="Raisen C."/>
            <person name="Dyer L."/>
            <person name="Leung K."/>
            <person name="Robertson L."/>
            <person name="Ambridge K."/>
            <person name="Leongamornlert D."/>
            <person name="McGuire S."/>
            <person name="Gilderthorp R."/>
            <person name="Griffiths C."/>
            <person name="Manthravadi D."/>
            <person name="Nichol S."/>
            <person name="Barker G."/>
            <person name="Whitehead S."/>
            <person name="Kay M."/>
            <person name="Brown J."/>
            <person name="Murnane C."/>
            <person name="Gray E."/>
            <person name="Humphries M."/>
            <person name="Sycamore N."/>
            <person name="Barker D."/>
            <person name="Saunders D."/>
            <person name="Wallis J."/>
            <person name="Babbage A."/>
            <person name="Hammond S."/>
            <person name="Mashreghi-Mohammadi M."/>
            <person name="Barr L."/>
            <person name="Martin S."/>
            <person name="Wray P."/>
            <person name="Ellington A."/>
            <person name="Matthews N."/>
            <person name="Ellwood M."/>
            <person name="Woodmansey R."/>
            <person name="Clark G."/>
            <person name="Cooper J."/>
            <person name="Tromans A."/>
            <person name="Grafham D."/>
            <person name="Skuce C."/>
            <person name="Pandian R."/>
            <person name="Andrews R."/>
            <person name="Harrison E."/>
            <person name="Kimberley A."/>
            <person name="Garnett J."/>
            <person name="Fosker N."/>
            <person name="Hall R."/>
            <person name="Garner P."/>
            <person name="Kelly D."/>
            <person name="Bird C."/>
            <person name="Palmer S."/>
            <person name="Gehring I."/>
            <person name="Berger A."/>
            <person name="Dooley C.M."/>
            <person name="Ersan-Urun Z."/>
            <person name="Eser C."/>
            <person name="Geiger H."/>
            <person name="Geisler M."/>
            <person name="Karotki L."/>
            <person name="Kirn A."/>
            <person name="Konantz J."/>
            <person name="Konantz M."/>
            <person name="Oberlander M."/>
            <person name="Rudolph-Geiger S."/>
            <person name="Teucke M."/>
            <person name="Lanz C."/>
            <person name="Raddatz G."/>
            <person name="Osoegawa K."/>
            <person name="Zhu B."/>
            <person name="Rapp A."/>
            <person name="Widaa S."/>
            <person name="Langford C."/>
            <person name="Yang F."/>
            <person name="Schuster S.C."/>
            <person name="Carter N.P."/>
            <person name="Harrow J."/>
            <person name="Ning Z."/>
            <person name="Herrero J."/>
            <person name="Searle S.M."/>
            <person name="Enright A."/>
            <person name="Geisler R."/>
            <person name="Plasterk R.H."/>
            <person name="Lee C."/>
            <person name="Westerfield M."/>
            <person name="de Jong P.J."/>
            <person name="Zon L.I."/>
            <person name="Postlethwait J.H."/>
            <person name="Nusslein-Volhard C."/>
            <person name="Hubbard T.J."/>
            <person name="Roest Crollius H."/>
            <person name="Rogers J."/>
            <person name="Stemple D.L."/>
        </authorList>
    </citation>
    <scope>NUCLEOTIDE SEQUENCE [LARGE SCALE GENOMIC DNA]</scope>
    <source>
        <strain>Tuebingen</strain>
    </source>
</reference>
<reference key="2">
    <citation type="submission" date="2003-10" db="EMBL/GenBank/DDBJ databases">
        <authorList>
            <consortium name="NIH - Zebrafish Gene Collection (ZGC) project"/>
        </authorList>
    </citation>
    <scope>NUCLEOTIDE SEQUENCE [LARGE SCALE MRNA]</scope>
    <source>
        <tissue>Eye</tissue>
    </source>
</reference>
<reference key="3">
    <citation type="journal article" date="2016" name="Am. J. Hum. Genet.">
        <title>GNB5 mutations cause an autosomal-recessive multisystem syndrome with sinus bradycardia and cognitive disability.</title>
        <authorList>
            <person name="Lodder E.M."/>
            <person name="De Nittis P."/>
            <person name="Koopman C.D."/>
            <person name="Wiszniewski W."/>
            <person name="Moura de Souza C.F."/>
            <person name="Lahrouchi N."/>
            <person name="Guex N."/>
            <person name="Napolioni V."/>
            <person name="Tessadori F."/>
            <person name="Beekman L."/>
            <person name="Nannenberg E.A."/>
            <person name="Boualla L."/>
            <person name="Blom N.A."/>
            <person name="de Graaff W."/>
            <person name="Kamermans M."/>
            <person name="Cocciadiferro D."/>
            <person name="Malerba N."/>
            <person name="Mandriani B."/>
            <person name="Akdemir Z.H."/>
            <person name="Fish R.J."/>
            <person name="Eldomery M.K."/>
            <person name="Ratbi I."/>
            <person name="Wilde A.A."/>
            <person name="de Boer T."/>
            <person name="Simonds W.F."/>
            <person name="Neerman-Arbez M."/>
            <person name="Sutton V.R."/>
            <person name="Kok F."/>
            <person name="Lupski J.R."/>
            <person name="Reymond A."/>
            <person name="Bezzina C.R."/>
            <person name="Bakkers J."/>
            <person name="Merla G."/>
        </authorList>
    </citation>
    <scope>FUNCTION</scope>
    <scope>DISRUPTION PHENOTYPE</scope>
</reference>
<dbReference type="EMBL" id="AL935189">
    <property type="status" value="NOT_ANNOTATED_CDS"/>
    <property type="molecule type" value="Genomic_DNA"/>
</dbReference>
<dbReference type="EMBL" id="BC059544">
    <property type="protein sequence ID" value="AAH59544.1"/>
    <property type="molecule type" value="mRNA"/>
</dbReference>
<dbReference type="RefSeq" id="NP_957040.1">
    <property type="nucleotide sequence ID" value="NM_200746.1"/>
</dbReference>
<dbReference type="SMR" id="Q6PBY0"/>
<dbReference type="FunCoup" id="Q6PBY0">
    <property type="interactions" value="207"/>
</dbReference>
<dbReference type="STRING" id="7955.ENSDARP00000072190"/>
<dbReference type="PaxDb" id="7955-ENSDARP00000072190"/>
<dbReference type="Ensembl" id="ENSDART00000077724">
    <property type="protein sequence ID" value="ENSDARP00000072190"/>
    <property type="gene ID" value="ENSDARG00000055377"/>
</dbReference>
<dbReference type="GeneID" id="393719"/>
<dbReference type="KEGG" id="dre:393719"/>
<dbReference type="AGR" id="ZFIN:ZDB-GENE-040426-1712"/>
<dbReference type="CTD" id="393719"/>
<dbReference type="ZFIN" id="ZDB-GENE-040426-1712">
    <property type="gene designation" value="gnb5b"/>
</dbReference>
<dbReference type="eggNOG" id="KOG0286">
    <property type="taxonomic scope" value="Eukaryota"/>
</dbReference>
<dbReference type="HOGENOM" id="CLU_000288_57_34_1"/>
<dbReference type="InParanoid" id="Q6PBY0"/>
<dbReference type="OMA" id="WDNTLRK"/>
<dbReference type="OrthoDB" id="10255630at2759"/>
<dbReference type="PhylomeDB" id="Q6PBY0"/>
<dbReference type="TreeFam" id="TF106149"/>
<dbReference type="PRO" id="PR:Q6PBY0"/>
<dbReference type="Proteomes" id="UP000000437">
    <property type="component" value="Chromosome 18"/>
</dbReference>
<dbReference type="Bgee" id="ENSDARG00000055377">
    <property type="expression patterns" value="Expressed in heart and 16 other cell types or tissues"/>
</dbReference>
<dbReference type="ExpressionAtlas" id="Q6PBY0">
    <property type="expression patterns" value="baseline and differential"/>
</dbReference>
<dbReference type="GO" id="GO:0005737">
    <property type="term" value="C:cytoplasm"/>
    <property type="evidence" value="ECO:0000318"/>
    <property type="project" value="GO_Central"/>
</dbReference>
<dbReference type="GO" id="GO:0005834">
    <property type="term" value="C:heterotrimeric G-protein complex"/>
    <property type="evidence" value="ECO:0000318"/>
    <property type="project" value="GO_Central"/>
</dbReference>
<dbReference type="GO" id="GO:0030159">
    <property type="term" value="F:signaling receptor complex adaptor activity"/>
    <property type="evidence" value="ECO:0000318"/>
    <property type="project" value="GO_Central"/>
</dbReference>
<dbReference type="GO" id="GO:0007212">
    <property type="term" value="P:G protein-coupled dopamine receptor signaling pathway"/>
    <property type="evidence" value="ECO:0000318"/>
    <property type="project" value="GO_Central"/>
</dbReference>
<dbReference type="CDD" id="cd00200">
    <property type="entry name" value="WD40"/>
    <property type="match status" value="1"/>
</dbReference>
<dbReference type="FunFam" id="2.130.10.10:FF:000020">
    <property type="entry name" value="Guanine nucleotide-binding protein beta subunit"/>
    <property type="match status" value="1"/>
</dbReference>
<dbReference type="Gene3D" id="2.130.10.10">
    <property type="entry name" value="YVTN repeat-like/Quinoprotein amine dehydrogenase"/>
    <property type="match status" value="1"/>
</dbReference>
<dbReference type="InterPro" id="IPR020472">
    <property type="entry name" value="G-protein_beta_WD-40_rep"/>
</dbReference>
<dbReference type="InterPro" id="IPR001632">
    <property type="entry name" value="Gprotein_B"/>
</dbReference>
<dbReference type="InterPro" id="IPR016346">
    <property type="entry name" value="Guanine_nucleotide-bd_bsu"/>
</dbReference>
<dbReference type="InterPro" id="IPR015943">
    <property type="entry name" value="WD40/YVTN_repeat-like_dom_sf"/>
</dbReference>
<dbReference type="InterPro" id="IPR019775">
    <property type="entry name" value="WD40_repeat_CS"/>
</dbReference>
<dbReference type="InterPro" id="IPR036322">
    <property type="entry name" value="WD40_repeat_dom_sf"/>
</dbReference>
<dbReference type="InterPro" id="IPR001680">
    <property type="entry name" value="WD40_rpt"/>
</dbReference>
<dbReference type="PANTHER" id="PTHR19850">
    <property type="entry name" value="GUANINE NUCLEOTIDE-BINDING PROTEIN BETA G PROTEIN BETA"/>
    <property type="match status" value="1"/>
</dbReference>
<dbReference type="Pfam" id="PF25391">
    <property type="entry name" value="WD40_Gbeta"/>
    <property type="match status" value="1"/>
</dbReference>
<dbReference type="PIRSF" id="PIRSF002394">
    <property type="entry name" value="GN-bd_beta"/>
    <property type="match status" value="1"/>
</dbReference>
<dbReference type="PRINTS" id="PR00319">
    <property type="entry name" value="GPROTEINB"/>
</dbReference>
<dbReference type="PRINTS" id="PR00320">
    <property type="entry name" value="GPROTEINBRPT"/>
</dbReference>
<dbReference type="SMART" id="SM00320">
    <property type="entry name" value="WD40"/>
    <property type="match status" value="7"/>
</dbReference>
<dbReference type="SUPFAM" id="SSF50978">
    <property type="entry name" value="WD40 repeat-like"/>
    <property type="match status" value="1"/>
</dbReference>
<dbReference type="PROSITE" id="PS00678">
    <property type="entry name" value="WD_REPEATS_1"/>
    <property type="match status" value="3"/>
</dbReference>
<dbReference type="PROSITE" id="PS50082">
    <property type="entry name" value="WD_REPEATS_2"/>
    <property type="match status" value="6"/>
</dbReference>
<dbReference type="PROSITE" id="PS50294">
    <property type="entry name" value="WD_REPEATS_REGION"/>
    <property type="match status" value="1"/>
</dbReference>
<feature type="chain" id="PRO_0000439760" description="Guanine nucleotide-binding protein subunit beta-5b">
    <location>
        <begin position="1"/>
        <end position="395"/>
    </location>
</feature>
<feature type="repeat" description="WD 1" evidence="3">
    <location>
        <begin position="103"/>
        <end position="142"/>
    </location>
</feature>
<feature type="repeat" description="WD 2" evidence="3">
    <location>
        <begin position="145"/>
        <end position="184"/>
    </location>
</feature>
<feature type="repeat" description="WD 3" evidence="3">
    <location>
        <begin position="193"/>
        <end position="234"/>
    </location>
</feature>
<feature type="repeat" description="WD 4" evidence="3">
    <location>
        <begin position="235"/>
        <end position="276"/>
    </location>
</feature>
<feature type="repeat" description="WD 5" evidence="3">
    <location>
        <begin position="279"/>
        <end position="318"/>
    </location>
</feature>
<feature type="repeat" description="WD 6" evidence="3">
    <location>
        <begin position="320"/>
        <end position="362"/>
    </location>
</feature>
<feature type="repeat" description="WD 7" evidence="3">
    <location>
        <begin position="365"/>
        <end position="395"/>
    </location>
</feature>
<proteinExistence type="evidence at transcript level"/>